<comment type="function">
    <text evidence="1">Catalyzes the attachment of tyrosine to tRNA(Tyr) in a two-step reaction: tyrosine is first activated by ATP to form Tyr-AMP and then transferred to the acceptor end of tRNA(Tyr).</text>
</comment>
<comment type="catalytic activity">
    <reaction evidence="1">
        <text>tRNA(Tyr) + L-tyrosine + ATP = L-tyrosyl-tRNA(Tyr) + AMP + diphosphate + H(+)</text>
        <dbReference type="Rhea" id="RHEA:10220"/>
        <dbReference type="Rhea" id="RHEA-COMP:9706"/>
        <dbReference type="Rhea" id="RHEA-COMP:9707"/>
        <dbReference type="ChEBI" id="CHEBI:15378"/>
        <dbReference type="ChEBI" id="CHEBI:30616"/>
        <dbReference type="ChEBI" id="CHEBI:33019"/>
        <dbReference type="ChEBI" id="CHEBI:58315"/>
        <dbReference type="ChEBI" id="CHEBI:78442"/>
        <dbReference type="ChEBI" id="CHEBI:78536"/>
        <dbReference type="ChEBI" id="CHEBI:456215"/>
        <dbReference type="EC" id="6.1.1.1"/>
    </reaction>
</comment>
<comment type="subunit">
    <text evidence="1">Homodimer.</text>
</comment>
<comment type="subcellular location">
    <subcellularLocation>
        <location evidence="1">Cytoplasm</location>
    </subcellularLocation>
</comment>
<comment type="similarity">
    <text evidence="1">Belongs to the class-I aminoacyl-tRNA synthetase family. TyrS type 1 subfamily.</text>
</comment>
<protein>
    <recommendedName>
        <fullName evidence="1">Tyrosine--tRNA ligase</fullName>
        <ecNumber evidence="1">6.1.1.1</ecNumber>
    </recommendedName>
    <alternativeName>
        <fullName evidence="1">Tyrosyl-tRNA synthetase</fullName>
        <shortName evidence="1">TyrRS</shortName>
    </alternativeName>
</protein>
<reference key="1">
    <citation type="journal article" date="2005" name="PLoS Biol.">
        <title>The Wolbachia genome of Brugia malayi: endosymbiont evolution within a human pathogenic nematode.</title>
        <authorList>
            <person name="Foster J."/>
            <person name="Ganatra M."/>
            <person name="Kamal I."/>
            <person name="Ware J."/>
            <person name="Makarova K."/>
            <person name="Ivanova N."/>
            <person name="Bhattacharyya A."/>
            <person name="Kapatral V."/>
            <person name="Kumar S."/>
            <person name="Posfai J."/>
            <person name="Vincze T."/>
            <person name="Ingram J."/>
            <person name="Moran L."/>
            <person name="Lapidus A."/>
            <person name="Omelchenko M."/>
            <person name="Kyrpides N."/>
            <person name="Ghedin E."/>
            <person name="Wang S."/>
            <person name="Goltsman E."/>
            <person name="Joukov V."/>
            <person name="Ostrovskaya O."/>
            <person name="Tsukerman K."/>
            <person name="Mazur M."/>
            <person name="Comb D."/>
            <person name="Koonin E."/>
            <person name="Slatko B."/>
        </authorList>
    </citation>
    <scope>NUCLEOTIDE SEQUENCE [LARGE SCALE GENOMIC DNA]</scope>
    <source>
        <strain>TRS</strain>
    </source>
</reference>
<evidence type="ECO:0000255" key="1">
    <source>
        <dbReference type="HAMAP-Rule" id="MF_02006"/>
    </source>
</evidence>
<sequence>MKHKSEFLNFIQERGYLCQCTNIEGLDQLLLQNNYVVAYIGFDCTASSLHVGSLIQIMMLRHLQKFGYKPIVLLGGSTTKIGDPSGKDKARSVLPIEDINQNISGIKKALKKMVYFNDGKAGAIIVNNADWLDSIKYIDFLRDIGAHFSVNRMLSFDSAKTRLDREQNLSFLEFNYMLLQAYDFAELNKKYGCRLQIGGSDQWGNIVNGIELGKKLNLPELFGLTTPLLLSAQGKKMGKTESGTVWLDGDMLKPYDYWQYFRNIDDQDIGRFLRFFTDLPIDEIKKLESLKNQEINEAKKALATEVTKICHGDKEAELAQSSAVSVFENGDSSLLPDYTITKKQVANGISLIDLLHDIGLEPSKGAAKRLIQGNGCKVNDYTINDINYIINSKSFKDQSFIKLSAGKKRHIKVMVS</sequence>
<proteinExistence type="inferred from homology"/>
<gene>
    <name evidence="1" type="primary">tyrS</name>
    <name type="ordered locus">Wbm0248</name>
</gene>
<organism>
    <name type="scientific">Wolbachia sp. subsp. Brugia malayi (strain TRS)</name>
    <dbReference type="NCBI Taxonomy" id="292805"/>
    <lineage>
        <taxon>Bacteria</taxon>
        <taxon>Pseudomonadati</taxon>
        <taxon>Pseudomonadota</taxon>
        <taxon>Alphaproteobacteria</taxon>
        <taxon>Rickettsiales</taxon>
        <taxon>Anaplasmataceae</taxon>
        <taxon>Wolbachieae</taxon>
        <taxon>Wolbachia</taxon>
    </lineage>
</organism>
<accession>Q5GT37</accession>
<feature type="chain" id="PRO_0000234815" description="Tyrosine--tRNA ligase">
    <location>
        <begin position="1"/>
        <end position="416"/>
    </location>
</feature>
<feature type="domain" description="S4 RNA-binding" evidence="1">
    <location>
        <begin position="349"/>
        <end position="415"/>
    </location>
</feature>
<feature type="short sequence motif" description="'HIGH' region">
    <location>
        <begin position="44"/>
        <end position="53"/>
    </location>
</feature>
<feature type="short sequence motif" description="'KMSKS' region">
    <location>
        <begin position="236"/>
        <end position="240"/>
    </location>
</feature>
<feature type="binding site" evidence="1">
    <location>
        <position position="39"/>
    </location>
    <ligand>
        <name>L-tyrosine</name>
        <dbReference type="ChEBI" id="CHEBI:58315"/>
    </ligand>
</feature>
<feature type="binding site" evidence="1">
    <location>
        <position position="176"/>
    </location>
    <ligand>
        <name>L-tyrosine</name>
        <dbReference type="ChEBI" id="CHEBI:58315"/>
    </ligand>
</feature>
<feature type="binding site" evidence="1">
    <location>
        <position position="180"/>
    </location>
    <ligand>
        <name>L-tyrosine</name>
        <dbReference type="ChEBI" id="CHEBI:58315"/>
    </ligand>
</feature>
<feature type="binding site" evidence="1">
    <location>
        <position position="239"/>
    </location>
    <ligand>
        <name>ATP</name>
        <dbReference type="ChEBI" id="CHEBI:30616"/>
    </ligand>
</feature>
<keyword id="KW-0030">Aminoacyl-tRNA synthetase</keyword>
<keyword id="KW-0067">ATP-binding</keyword>
<keyword id="KW-0963">Cytoplasm</keyword>
<keyword id="KW-0436">Ligase</keyword>
<keyword id="KW-0547">Nucleotide-binding</keyword>
<keyword id="KW-0648">Protein biosynthesis</keyword>
<keyword id="KW-1185">Reference proteome</keyword>
<keyword id="KW-0694">RNA-binding</keyword>
<name>SYY_WOLTR</name>
<dbReference type="EC" id="6.1.1.1" evidence="1"/>
<dbReference type="EMBL" id="AE017321">
    <property type="protein sequence ID" value="AAW70837.1"/>
    <property type="molecule type" value="Genomic_DNA"/>
</dbReference>
<dbReference type="RefSeq" id="WP_011256447.1">
    <property type="nucleotide sequence ID" value="NC_006833.1"/>
</dbReference>
<dbReference type="SMR" id="Q5GT37"/>
<dbReference type="STRING" id="292805.Wbm0248"/>
<dbReference type="KEGG" id="wbm:Wbm0248"/>
<dbReference type="eggNOG" id="COG0162">
    <property type="taxonomic scope" value="Bacteria"/>
</dbReference>
<dbReference type="HOGENOM" id="CLU_024003_0_3_5"/>
<dbReference type="Proteomes" id="UP000000534">
    <property type="component" value="Chromosome"/>
</dbReference>
<dbReference type="GO" id="GO:0005829">
    <property type="term" value="C:cytosol"/>
    <property type="evidence" value="ECO:0007669"/>
    <property type="project" value="TreeGrafter"/>
</dbReference>
<dbReference type="GO" id="GO:0005524">
    <property type="term" value="F:ATP binding"/>
    <property type="evidence" value="ECO:0007669"/>
    <property type="project" value="UniProtKB-UniRule"/>
</dbReference>
<dbReference type="GO" id="GO:0003723">
    <property type="term" value="F:RNA binding"/>
    <property type="evidence" value="ECO:0007669"/>
    <property type="project" value="UniProtKB-KW"/>
</dbReference>
<dbReference type="GO" id="GO:0004831">
    <property type="term" value="F:tyrosine-tRNA ligase activity"/>
    <property type="evidence" value="ECO:0007669"/>
    <property type="project" value="UniProtKB-UniRule"/>
</dbReference>
<dbReference type="GO" id="GO:0006437">
    <property type="term" value="P:tyrosyl-tRNA aminoacylation"/>
    <property type="evidence" value="ECO:0007669"/>
    <property type="project" value="UniProtKB-UniRule"/>
</dbReference>
<dbReference type="CDD" id="cd00165">
    <property type="entry name" value="S4"/>
    <property type="match status" value="1"/>
</dbReference>
<dbReference type="CDD" id="cd00805">
    <property type="entry name" value="TyrRS_core"/>
    <property type="match status" value="1"/>
</dbReference>
<dbReference type="FunFam" id="1.10.240.10:FF:000001">
    <property type="entry name" value="Tyrosine--tRNA ligase"/>
    <property type="match status" value="1"/>
</dbReference>
<dbReference type="Gene3D" id="3.40.50.620">
    <property type="entry name" value="HUPs"/>
    <property type="match status" value="1"/>
</dbReference>
<dbReference type="Gene3D" id="3.10.290.10">
    <property type="entry name" value="RNA-binding S4 domain"/>
    <property type="match status" value="1"/>
</dbReference>
<dbReference type="Gene3D" id="1.10.240.10">
    <property type="entry name" value="Tyrosyl-Transfer RNA Synthetase"/>
    <property type="match status" value="1"/>
</dbReference>
<dbReference type="HAMAP" id="MF_02006">
    <property type="entry name" value="Tyr_tRNA_synth_type1"/>
    <property type="match status" value="1"/>
</dbReference>
<dbReference type="InterPro" id="IPR002305">
    <property type="entry name" value="aa-tRNA-synth_Ic"/>
</dbReference>
<dbReference type="InterPro" id="IPR014729">
    <property type="entry name" value="Rossmann-like_a/b/a_fold"/>
</dbReference>
<dbReference type="InterPro" id="IPR036986">
    <property type="entry name" value="S4_RNA-bd_sf"/>
</dbReference>
<dbReference type="InterPro" id="IPR054608">
    <property type="entry name" value="SYY-like_C"/>
</dbReference>
<dbReference type="InterPro" id="IPR002307">
    <property type="entry name" value="Tyr-tRNA-ligase"/>
</dbReference>
<dbReference type="InterPro" id="IPR024088">
    <property type="entry name" value="Tyr-tRNA-ligase_bac-type"/>
</dbReference>
<dbReference type="InterPro" id="IPR024107">
    <property type="entry name" value="Tyr-tRNA-ligase_bac_1"/>
</dbReference>
<dbReference type="NCBIfam" id="TIGR00234">
    <property type="entry name" value="tyrS"/>
    <property type="match status" value="1"/>
</dbReference>
<dbReference type="PANTHER" id="PTHR11766:SF0">
    <property type="entry name" value="TYROSINE--TRNA LIGASE, MITOCHONDRIAL"/>
    <property type="match status" value="1"/>
</dbReference>
<dbReference type="PANTHER" id="PTHR11766">
    <property type="entry name" value="TYROSYL-TRNA SYNTHETASE"/>
    <property type="match status" value="1"/>
</dbReference>
<dbReference type="Pfam" id="PF22421">
    <property type="entry name" value="SYY_C-terminal"/>
    <property type="match status" value="1"/>
</dbReference>
<dbReference type="Pfam" id="PF00579">
    <property type="entry name" value="tRNA-synt_1b"/>
    <property type="match status" value="1"/>
</dbReference>
<dbReference type="PRINTS" id="PR01040">
    <property type="entry name" value="TRNASYNTHTYR"/>
</dbReference>
<dbReference type="SUPFAM" id="SSF55174">
    <property type="entry name" value="Alpha-L RNA-binding motif"/>
    <property type="match status" value="1"/>
</dbReference>
<dbReference type="SUPFAM" id="SSF52374">
    <property type="entry name" value="Nucleotidylyl transferase"/>
    <property type="match status" value="1"/>
</dbReference>
<dbReference type="PROSITE" id="PS50889">
    <property type="entry name" value="S4"/>
    <property type="match status" value="1"/>
</dbReference>